<comment type="function">
    <text evidence="1">Heme-binding protein able to scavenge peroxynitrite and to protect free L-tyrosine against peroxynitrite-mediated nitration, by acting as a peroxynitrite isomerase that converts peroxynitrite to nitrate. Therefore, this protein likely plays a role in peroxynitrite sensing and in the detoxification of reactive nitrogen and oxygen species (RNS and ROS, respectively). Is able to bind nitric oxide (NO) in vitro, but may act as a sensor of peroxynitrite levels in vivo.</text>
</comment>
<comment type="catalytic activity">
    <reaction evidence="1">
        <text>peroxynitrite = nitrate</text>
        <dbReference type="Rhea" id="RHEA:63116"/>
        <dbReference type="ChEBI" id="CHEBI:17632"/>
        <dbReference type="ChEBI" id="CHEBI:25941"/>
    </reaction>
    <physiologicalReaction direction="left-to-right" evidence="1">
        <dbReference type="Rhea" id="RHEA:63117"/>
    </physiologicalReaction>
</comment>
<comment type="cofactor">
    <cofactor evidence="1">
        <name>heme b</name>
        <dbReference type="ChEBI" id="CHEBI:60344"/>
    </cofactor>
    <text evidence="1">Binds 1 heme b group per subunit, that coordinates a highly solvent-exposed Fe(III) atom.</text>
</comment>
<comment type="pathway">
    <text evidence="1">Nitrogen metabolism.</text>
</comment>
<comment type="subunit">
    <text evidence="1">Homodimer.</text>
</comment>
<comment type="domain">
    <text evidence="1">Forms a 10-stranded antiparallel beta-barrel structure able to accommodate a hydrophobic ligand in its interior. In fact, this fold hosts the heme group, which is located in a wide surface cleft.</text>
</comment>
<comment type="similarity">
    <text evidence="1">Belongs to the nitrobindin family.</text>
</comment>
<keyword id="KW-0349">Heme</keyword>
<keyword id="KW-0408">Iron</keyword>
<keyword id="KW-0413">Isomerase</keyword>
<keyword id="KW-0479">Metal-binding</keyword>
<gene>
    <name type="ordered locus">BCG_2730c</name>
</gene>
<proteinExistence type="inferred from homology"/>
<name>NB2_MYCBP</name>
<feature type="chain" id="PRO_0000356917" description="Peroxynitrite isomerase 2">
    <location>
        <begin position="1"/>
        <end position="164"/>
    </location>
</feature>
<feature type="short sequence motif" description="GXWXGXG" evidence="1">
    <location>
        <begin position="17"/>
        <end position="23"/>
    </location>
</feature>
<feature type="binding site" description="axial binding residue" evidence="1">
    <location>
        <position position="155"/>
    </location>
    <ligand>
        <name>heme b</name>
        <dbReference type="ChEBI" id="CHEBI:60344"/>
    </ligand>
    <ligandPart>
        <name>Fe</name>
        <dbReference type="ChEBI" id="CHEBI:18248"/>
    </ligandPart>
</feature>
<sequence>MTRDLAPALQALSPLLGSWAGRGAGKYPTIRPFEYLEEVVFAHVGKPFLTYTQQTRAVADGKPLHSETGYLRVCRPGCVELVLAHPSGITEIEVGTYSVTGDVIELELSTRADGSIGLAPTAKEVTALDRSYRIDGDELSYSLQMRAVGQPLQDHLAAVLHRQR</sequence>
<accession>A1KM55</accession>
<reference key="1">
    <citation type="journal article" date="2007" name="Proc. Natl. Acad. Sci. U.S.A.">
        <title>Genome plasticity of BCG and impact on vaccine efficacy.</title>
        <authorList>
            <person name="Brosch R."/>
            <person name="Gordon S.V."/>
            <person name="Garnier T."/>
            <person name="Eiglmeier K."/>
            <person name="Frigui W."/>
            <person name="Valenti P."/>
            <person name="Dos Santos S."/>
            <person name="Duthoy S."/>
            <person name="Lacroix C."/>
            <person name="Garcia-Pelayo C."/>
            <person name="Inwald J.K."/>
            <person name="Golby P."/>
            <person name="Garcia J.N."/>
            <person name="Hewinson R.G."/>
            <person name="Behr M.A."/>
            <person name="Quail M.A."/>
            <person name="Churcher C."/>
            <person name="Barrell B.G."/>
            <person name="Parkhill J."/>
            <person name="Cole S.T."/>
        </authorList>
    </citation>
    <scope>NUCLEOTIDE SEQUENCE [LARGE SCALE GENOMIC DNA]</scope>
    <source>
        <strain>BCG / Pasteur 1173P2</strain>
    </source>
</reference>
<evidence type="ECO:0000255" key="1">
    <source>
        <dbReference type="HAMAP-Rule" id="MF_01297"/>
    </source>
</evidence>
<dbReference type="EC" id="5.99.-.-" evidence="1"/>
<dbReference type="EMBL" id="AM408590">
    <property type="protein sequence ID" value="CAL72718.1"/>
    <property type="molecule type" value="Genomic_DNA"/>
</dbReference>
<dbReference type="RefSeq" id="WP_003900559.1">
    <property type="nucleotide sequence ID" value="NC_008769.1"/>
</dbReference>
<dbReference type="SMR" id="A1KM55"/>
<dbReference type="KEGG" id="mbb:BCG_2730c"/>
<dbReference type="HOGENOM" id="CLU_085483_1_0_11"/>
<dbReference type="Proteomes" id="UP000001472">
    <property type="component" value="Chromosome"/>
</dbReference>
<dbReference type="GO" id="GO:0020037">
    <property type="term" value="F:heme binding"/>
    <property type="evidence" value="ECO:0007669"/>
    <property type="project" value="UniProtKB-UniRule"/>
</dbReference>
<dbReference type="GO" id="GO:0046872">
    <property type="term" value="F:metal ion binding"/>
    <property type="evidence" value="ECO:0007669"/>
    <property type="project" value="UniProtKB-KW"/>
</dbReference>
<dbReference type="GO" id="GO:0062213">
    <property type="term" value="F:peroxynitrite isomerase activity"/>
    <property type="evidence" value="ECO:0007669"/>
    <property type="project" value="UniProtKB-UniRule"/>
</dbReference>
<dbReference type="CDD" id="cd07828">
    <property type="entry name" value="lipocalin_heme-bd-THAP4-like"/>
    <property type="match status" value="1"/>
</dbReference>
<dbReference type="Gene3D" id="2.40.128.20">
    <property type="match status" value="1"/>
</dbReference>
<dbReference type="HAMAP" id="MF_01297">
    <property type="entry name" value="nitrobindin"/>
    <property type="match status" value="1"/>
</dbReference>
<dbReference type="InterPro" id="IPR012674">
    <property type="entry name" value="Calycin"/>
</dbReference>
<dbReference type="InterPro" id="IPR022939">
    <property type="entry name" value="Nb(III)_bact/plant"/>
</dbReference>
<dbReference type="InterPro" id="IPR045165">
    <property type="entry name" value="Nitrobindin"/>
</dbReference>
<dbReference type="InterPro" id="IPR054873">
    <property type="entry name" value="PeroxynitIsom"/>
</dbReference>
<dbReference type="InterPro" id="IPR014878">
    <property type="entry name" value="THAP4-like_heme-bd"/>
</dbReference>
<dbReference type="NCBIfam" id="NF045819">
    <property type="entry name" value="PeroxynitIsom"/>
    <property type="match status" value="1"/>
</dbReference>
<dbReference type="PANTHER" id="PTHR15854:SF4">
    <property type="entry name" value="PEROXYNITRITE ISOMERASE THAP4"/>
    <property type="match status" value="1"/>
</dbReference>
<dbReference type="PANTHER" id="PTHR15854">
    <property type="entry name" value="THAP4 PROTEIN"/>
    <property type="match status" value="1"/>
</dbReference>
<dbReference type="Pfam" id="PF08768">
    <property type="entry name" value="THAP4_heme-bd"/>
    <property type="match status" value="1"/>
</dbReference>
<dbReference type="SUPFAM" id="SSF50814">
    <property type="entry name" value="Lipocalins"/>
    <property type="match status" value="1"/>
</dbReference>
<protein>
    <recommendedName>
        <fullName>Peroxynitrite isomerase 2</fullName>
        <ecNumber evidence="1">5.99.-.-</ecNumber>
    </recommendedName>
    <alternativeName>
        <fullName>Ferric nitrobindin</fullName>
        <shortName>Nb(III)</shortName>
    </alternativeName>
</protein>
<organism>
    <name type="scientific">Mycobacterium bovis (strain BCG / Pasteur 1173P2)</name>
    <dbReference type="NCBI Taxonomy" id="410289"/>
    <lineage>
        <taxon>Bacteria</taxon>
        <taxon>Bacillati</taxon>
        <taxon>Actinomycetota</taxon>
        <taxon>Actinomycetes</taxon>
        <taxon>Mycobacteriales</taxon>
        <taxon>Mycobacteriaceae</taxon>
        <taxon>Mycobacterium</taxon>
        <taxon>Mycobacterium tuberculosis complex</taxon>
    </lineage>
</organism>